<evidence type="ECO:0000255" key="1">
    <source>
        <dbReference type="HAMAP-Rule" id="MF_00175"/>
    </source>
</evidence>
<evidence type="ECO:0000255" key="2">
    <source>
        <dbReference type="PROSITE-ProRule" id="PRU01250"/>
    </source>
</evidence>
<proteinExistence type="inferred from homology"/>
<organism>
    <name type="scientific">Acidithiobacillus ferrooxidans (strain ATCC 23270 / DSM 14882 / CIP 104768 / NCIMB 8455)</name>
    <name type="common">Ferrobacillus ferrooxidans (strain ATCC 23270)</name>
    <dbReference type="NCBI Taxonomy" id="243159"/>
    <lineage>
        <taxon>Bacteria</taxon>
        <taxon>Pseudomonadati</taxon>
        <taxon>Pseudomonadota</taxon>
        <taxon>Acidithiobacillia</taxon>
        <taxon>Acidithiobacillales</taxon>
        <taxon>Acidithiobacillaceae</taxon>
        <taxon>Acidithiobacillus</taxon>
    </lineage>
</organism>
<comment type="function">
    <text evidence="1">ATP-dependent specificity component of the Clp protease. It directs the protease to specific substrates. Can perform chaperone functions in the absence of ClpP.</text>
</comment>
<comment type="subunit">
    <text evidence="1">Component of the ClpX-ClpP complex. Forms a hexameric ring that, in the presence of ATP, binds to fourteen ClpP subunits assembled into a disk-like structure with a central cavity, resembling the structure of eukaryotic proteasomes.</text>
</comment>
<comment type="similarity">
    <text evidence="1">Belongs to the ClpX chaperone family.</text>
</comment>
<accession>B7J791</accession>
<name>CLPX_ACIF2</name>
<protein>
    <recommendedName>
        <fullName evidence="1">ATP-dependent Clp protease ATP-binding subunit ClpX</fullName>
    </recommendedName>
</protein>
<sequence>MAGKHEGSGEKTLYCSFCGKSQHEVRKLIAGPSVFICDECIELCNDIVKDEILDDHSEAQDKLPKPMEIRKTLDDYVIGQDVAKKVLSVAVYNHYKRLEHGGKDNEVELDKSNILLIGPTGSGKTLLAQTLARLLNVPFAMADATTLTEAGYVGEDVENIIQKLLQKCDYDVEKAQTGIVYIDEIDKITRKSENPSITRDVSGEGVQQALLKLIEGTVASVPPQGGRKHPQQEFLQVDTRHILFICGGAFAGLEKSVSARLEKGGMGFNAPLKRRDKEATAAMLMQNLEPEDLVRYGLIPEFVGRLPILALLEELDEEALISILTDPKNALVKQYQKLFALEGVTLEFRTEALRAIAKKALARKTGARGLRSILEQILLDTMYELPSMSGVKKVVVDAAVVESGTKPLLVYDDAAKVDMSHPA</sequence>
<reference key="1">
    <citation type="journal article" date="2008" name="BMC Genomics">
        <title>Acidithiobacillus ferrooxidans metabolism: from genome sequence to industrial applications.</title>
        <authorList>
            <person name="Valdes J."/>
            <person name="Pedroso I."/>
            <person name="Quatrini R."/>
            <person name="Dodson R.J."/>
            <person name="Tettelin H."/>
            <person name="Blake R. II"/>
            <person name="Eisen J.A."/>
            <person name="Holmes D.S."/>
        </authorList>
    </citation>
    <scope>NUCLEOTIDE SEQUENCE [LARGE SCALE GENOMIC DNA]</scope>
    <source>
        <strain>ATCC 23270 / DSM 14882 / CIP 104768 / NCIMB 8455</strain>
    </source>
</reference>
<feature type="chain" id="PRO_1000189672" description="ATP-dependent Clp protease ATP-binding subunit ClpX">
    <location>
        <begin position="1"/>
        <end position="423"/>
    </location>
</feature>
<feature type="domain" description="ClpX-type ZB" evidence="2">
    <location>
        <begin position="3"/>
        <end position="56"/>
    </location>
</feature>
<feature type="binding site" evidence="2">
    <location>
        <position position="15"/>
    </location>
    <ligand>
        <name>Zn(2+)</name>
        <dbReference type="ChEBI" id="CHEBI:29105"/>
    </ligand>
</feature>
<feature type="binding site" evidence="2">
    <location>
        <position position="18"/>
    </location>
    <ligand>
        <name>Zn(2+)</name>
        <dbReference type="ChEBI" id="CHEBI:29105"/>
    </ligand>
</feature>
<feature type="binding site" evidence="2">
    <location>
        <position position="37"/>
    </location>
    <ligand>
        <name>Zn(2+)</name>
        <dbReference type="ChEBI" id="CHEBI:29105"/>
    </ligand>
</feature>
<feature type="binding site" evidence="2">
    <location>
        <position position="40"/>
    </location>
    <ligand>
        <name>Zn(2+)</name>
        <dbReference type="ChEBI" id="CHEBI:29105"/>
    </ligand>
</feature>
<feature type="binding site" evidence="1">
    <location>
        <begin position="119"/>
        <end position="126"/>
    </location>
    <ligand>
        <name>ATP</name>
        <dbReference type="ChEBI" id="CHEBI:30616"/>
    </ligand>
</feature>
<dbReference type="EMBL" id="CP001219">
    <property type="protein sequence ID" value="ACK79181.1"/>
    <property type="molecule type" value="Genomic_DNA"/>
</dbReference>
<dbReference type="RefSeq" id="WP_012536430.1">
    <property type="nucleotide sequence ID" value="NC_011761.1"/>
</dbReference>
<dbReference type="SMR" id="B7J791"/>
<dbReference type="STRING" id="243159.AFE_0911"/>
<dbReference type="PaxDb" id="243159-AFE_0911"/>
<dbReference type="GeneID" id="65280234"/>
<dbReference type="KEGG" id="afr:AFE_0911"/>
<dbReference type="eggNOG" id="COG1219">
    <property type="taxonomic scope" value="Bacteria"/>
</dbReference>
<dbReference type="HOGENOM" id="CLU_014218_8_2_6"/>
<dbReference type="Proteomes" id="UP000001362">
    <property type="component" value="Chromosome"/>
</dbReference>
<dbReference type="GO" id="GO:0009376">
    <property type="term" value="C:HslUV protease complex"/>
    <property type="evidence" value="ECO:0007669"/>
    <property type="project" value="TreeGrafter"/>
</dbReference>
<dbReference type="GO" id="GO:0005524">
    <property type="term" value="F:ATP binding"/>
    <property type="evidence" value="ECO:0007669"/>
    <property type="project" value="UniProtKB-UniRule"/>
</dbReference>
<dbReference type="GO" id="GO:0016887">
    <property type="term" value="F:ATP hydrolysis activity"/>
    <property type="evidence" value="ECO:0007669"/>
    <property type="project" value="InterPro"/>
</dbReference>
<dbReference type="GO" id="GO:0140662">
    <property type="term" value="F:ATP-dependent protein folding chaperone"/>
    <property type="evidence" value="ECO:0007669"/>
    <property type="project" value="InterPro"/>
</dbReference>
<dbReference type="GO" id="GO:0046983">
    <property type="term" value="F:protein dimerization activity"/>
    <property type="evidence" value="ECO:0007669"/>
    <property type="project" value="InterPro"/>
</dbReference>
<dbReference type="GO" id="GO:0051082">
    <property type="term" value="F:unfolded protein binding"/>
    <property type="evidence" value="ECO:0007669"/>
    <property type="project" value="UniProtKB-UniRule"/>
</dbReference>
<dbReference type="GO" id="GO:0008270">
    <property type="term" value="F:zinc ion binding"/>
    <property type="evidence" value="ECO:0007669"/>
    <property type="project" value="InterPro"/>
</dbReference>
<dbReference type="GO" id="GO:0051301">
    <property type="term" value="P:cell division"/>
    <property type="evidence" value="ECO:0007669"/>
    <property type="project" value="TreeGrafter"/>
</dbReference>
<dbReference type="GO" id="GO:0051603">
    <property type="term" value="P:proteolysis involved in protein catabolic process"/>
    <property type="evidence" value="ECO:0007669"/>
    <property type="project" value="TreeGrafter"/>
</dbReference>
<dbReference type="CDD" id="cd19497">
    <property type="entry name" value="RecA-like_ClpX"/>
    <property type="match status" value="1"/>
</dbReference>
<dbReference type="FunFam" id="1.10.8.60:FF:000002">
    <property type="entry name" value="ATP-dependent Clp protease ATP-binding subunit ClpX"/>
    <property type="match status" value="1"/>
</dbReference>
<dbReference type="FunFam" id="3.40.50.300:FF:000005">
    <property type="entry name" value="ATP-dependent Clp protease ATP-binding subunit ClpX"/>
    <property type="match status" value="1"/>
</dbReference>
<dbReference type="Gene3D" id="1.10.8.60">
    <property type="match status" value="1"/>
</dbReference>
<dbReference type="Gene3D" id="6.20.220.10">
    <property type="entry name" value="ClpX chaperone, C4-type zinc finger domain"/>
    <property type="match status" value="1"/>
</dbReference>
<dbReference type="Gene3D" id="3.40.50.300">
    <property type="entry name" value="P-loop containing nucleotide triphosphate hydrolases"/>
    <property type="match status" value="1"/>
</dbReference>
<dbReference type="HAMAP" id="MF_00175">
    <property type="entry name" value="ClpX"/>
    <property type="match status" value="1"/>
</dbReference>
<dbReference type="InterPro" id="IPR003593">
    <property type="entry name" value="AAA+_ATPase"/>
</dbReference>
<dbReference type="InterPro" id="IPR050052">
    <property type="entry name" value="ATP-dep_Clp_protease_ClpX"/>
</dbReference>
<dbReference type="InterPro" id="IPR003959">
    <property type="entry name" value="ATPase_AAA_core"/>
</dbReference>
<dbReference type="InterPro" id="IPR019489">
    <property type="entry name" value="Clp_ATPase_C"/>
</dbReference>
<dbReference type="InterPro" id="IPR004487">
    <property type="entry name" value="Clp_protease_ATP-bd_su_ClpX"/>
</dbReference>
<dbReference type="InterPro" id="IPR046425">
    <property type="entry name" value="ClpX_bact"/>
</dbReference>
<dbReference type="InterPro" id="IPR027417">
    <property type="entry name" value="P-loop_NTPase"/>
</dbReference>
<dbReference type="InterPro" id="IPR010603">
    <property type="entry name" value="Znf_CppX_C4"/>
</dbReference>
<dbReference type="InterPro" id="IPR038366">
    <property type="entry name" value="Znf_CppX_C4_sf"/>
</dbReference>
<dbReference type="NCBIfam" id="TIGR00382">
    <property type="entry name" value="clpX"/>
    <property type="match status" value="1"/>
</dbReference>
<dbReference type="NCBIfam" id="NF003745">
    <property type="entry name" value="PRK05342.1"/>
    <property type="match status" value="1"/>
</dbReference>
<dbReference type="PANTHER" id="PTHR48102:SF7">
    <property type="entry name" value="ATP-DEPENDENT CLP PROTEASE ATP-BINDING SUBUNIT CLPX-LIKE, MITOCHONDRIAL"/>
    <property type="match status" value="1"/>
</dbReference>
<dbReference type="PANTHER" id="PTHR48102">
    <property type="entry name" value="ATP-DEPENDENT CLP PROTEASE ATP-BINDING SUBUNIT CLPX-LIKE, MITOCHONDRIAL-RELATED"/>
    <property type="match status" value="1"/>
</dbReference>
<dbReference type="Pfam" id="PF07724">
    <property type="entry name" value="AAA_2"/>
    <property type="match status" value="1"/>
</dbReference>
<dbReference type="Pfam" id="PF10431">
    <property type="entry name" value="ClpB_D2-small"/>
    <property type="match status" value="1"/>
</dbReference>
<dbReference type="Pfam" id="PF06689">
    <property type="entry name" value="zf-C4_ClpX"/>
    <property type="match status" value="1"/>
</dbReference>
<dbReference type="SMART" id="SM00382">
    <property type="entry name" value="AAA"/>
    <property type="match status" value="1"/>
</dbReference>
<dbReference type="SMART" id="SM01086">
    <property type="entry name" value="ClpB_D2-small"/>
    <property type="match status" value="1"/>
</dbReference>
<dbReference type="SMART" id="SM00994">
    <property type="entry name" value="zf-C4_ClpX"/>
    <property type="match status" value="1"/>
</dbReference>
<dbReference type="SUPFAM" id="SSF57716">
    <property type="entry name" value="Glucocorticoid receptor-like (DNA-binding domain)"/>
    <property type="match status" value="1"/>
</dbReference>
<dbReference type="SUPFAM" id="SSF52540">
    <property type="entry name" value="P-loop containing nucleoside triphosphate hydrolases"/>
    <property type="match status" value="1"/>
</dbReference>
<dbReference type="PROSITE" id="PS51902">
    <property type="entry name" value="CLPX_ZB"/>
    <property type="match status" value="1"/>
</dbReference>
<gene>
    <name evidence="1" type="primary">clpX</name>
    <name type="ordered locus">AFE_0911</name>
</gene>
<keyword id="KW-0067">ATP-binding</keyword>
<keyword id="KW-0143">Chaperone</keyword>
<keyword id="KW-0479">Metal-binding</keyword>
<keyword id="KW-0547">Nucleotide-binding</keyword>
<keyword id="KW-1185">Reference proteome</keyword>
<keyword id="KW-0862">Zinc</keyword>